<organism>
    <name type="scientific">Ectopseudomonas mendocina (strain ymp)</name>
    <name type="common">Pseudomonas mendocina</name>
    <dbReference type="NCBI Taxonomy" id="399739"/>
    <lineage>
        <taxon>Bacteria</taxon>
        <taxon>Pseudomonadati</taxon>
        <taxon>Pseudomonadota</taxon>
        <taxon>Gammaproteobacteria</taxon>
        <taxon>Pseudomonadales</taxon>
        <taxon>Pseudomonadaceae</taxon>
        <taxon>Ectopseudomonas</taxon>
    </lineage>
</organism>
<feature type="chain" id="PRO_1000006391" description="Glycine--tRNA ligase beta subunit">
    <location>
        <begin position="1"/>
        <end position="684"/>
    </location>
</feature>
<protein>
    <recommendedName>
        <fullName evidence="1">Glycine--tRNA ligase beta subunit</fullName>
        <ecNumber evidence="1">6.1.1.14</ecNumber>
    </recommendedName>
    <alternativeName>
        <fullName evidence="1">Glycyl-tRNA synthetase beta subunit</fullName>
        <shortName evidence="1">GlyRS</shortName>
    </alternativeName>
</protein>
<gene>
    <name evidence="1" type="primary">glyS</name>
    <name type="ordered locus">Pmen_0013</name>
</gene>
<dbReference type="EC" id="6.1.1.14" evidence="1"/>
<dbReference type="EMBL" id="CP000680">
    <property type="protein sequence ID" value="ABP82788.1"/>
    <property type="molecule type" value="Genomic_DNA"/>
</dbReference>
<dbReference type="SMR" id="A4XN72"/>
<dbReference type="STRING" id="399739.Pmen_0013"/>
<dbReference type="KEGG" id="pmy:Pmen_0013"/>
<dbReference type="PATRIC" id="fig|399739.8.peg.14"/>
<dbReference type="eggNOG" id="COG0751">
    <property type="taxonomic scope" value="Bacteria"/>
</dbReference>
<dbReference type="HOGENOM" id="CLU_007220_2_2_6"/>
<dbReference type="OrthoDB" id="9775440at2"/>
<dbReference type="GO" id="GO:0005829">
    <property type="term" value="C:cytosol"/>
    <property type="evidence" value="ECO:0007669"/>
    <property type="project" value="TreeGrafter"/>
</dbReference>
<dbReference type="GO" id="GO:0004814">
    <property type="term" value="F:arginine-tRNA ligase activity"/>
    <property type="evidence" value="ECO:0007669"/>
    <property type="project" value="InterPro"/>
</dbReference>
<dbReference type="GO" id="GO:0005524">
    <property type="term" value="F:ATP binding"/>
    <property type="evidence" value="ECO:0007669"/>
    <property type="project" value="UniProtKB-UniRule"/>
</dbReference>
<dbReference type="GO" id="GO:0004820">
    <property type="term" value="F:glycine-tRNA ligase activity"/>
    <property type="evidence" value="ECO:0007669"/>
    <property type="project" value="UniProtKB-UniRule"/>
</dbReference>
<dbReference type="GO" id="GO:0006420">
    <property type="term" value="P:arginyl-tRNA aminoacylation"/>
    <property type="evidence" value="ECO:0007669"/>
    <property type="project" value="InterPro"/>
</dbReference>
<dbReference type="GO" id="GO:0006426">
    <property type="term" value="P:glycyl-tRNA aminoacylation"/>
    <property type="evidence" value="ECO:0007669"/>
    <property type="project" value="UniProtKB-UniRule"/>
</dbReference>
<dbReference type="HAMAP" id="MF_00255">
    <property type="entry name" value="Gly_tRNA_synth_beta"/>
    <property type="match status" value="1"/>
</dbReference>
<dbReference type="InterPro" id="IPR008909">
    <property type="entry name" value="DALR_anticod-bd"/>
</dbReference>
<dbReference type="InterPro" id="IPR015944">
    <property type="entry name" value="Gly-tRNA-synth_bsu"/>
</dbReference>
<dbReference type="InterPro" id="IPR006194">
    <property type="entry name" value="Gly-tRNA-synth_heterodimer"/>
</dbReference>
<dbReference type="NCBIfam" id="TIGR00211">
    <property type="entry name" value="glyS"/>
    <property type="match status" value="1"/>
</dbReference>
<dbReference type="PANTHER" id="PTHR30075:SF2">
    <property type="entry name" value="GLYCINE--TRNA LIGASE, CHLOROPLASTIC_MITOCHONDRIAL 2"/>
    <property type="match status" value="1"/>
</dbReference>
<dbReference type="PANTHER" id="PTHR30075">
    <property type="entry name" value="GLYCYL-TRNA SYNTHETASE"/>
    <property type="match status" value="1"/>
</dbReference>
<dbReference type="Pfam" id="PF05746">
    <property type="entry name" value="DALR_1"/>
    <property type="match status" value="1"/>
</dbReference>
<dbReference type="Pfam" id="PF02092">
    <property type="entry name" value="tRNA_synt_2f"/>
    <property type="match status" value="1"/>
</dbReference>
<dbReference type="PRINTS" id="PR01045">
    <property type="entry name" value="TRNASYNTHGB"/>
</dbReference>
<dbReference type="SUPFAM" id="SSF109604">
    <property type="entry name" value="HD-domain/PDEase-like"/>
    <property type="match status" value="1"/>
</dbReference>
<dbReference type="PROSITE" id="PS50861">
    <property type="entry name" value="AA_TRNA_LIGASE_II_GLYAB"/>
    <property type="match status" value="1"/>
</dbReference>
<accession>A4XN72</accession>
<name>SYGB_ECTM1</name>
<keyword id="KW-0030">Aminoacyl-tRNA synthetase</keyword>
<keyword id="KW-0067">ATP-binding</keyword>
<keyword id="KW-0963">Cytoplasm</keyword>
<keyword id="KW-0436">Ligase</keyword>
<keyword id="KW-0547">Nucleotide-binding</keyword>
<keyword id="KW-0648">Protein biosynthesis</keyword>
<sequence>MSAKDFLVELGTEELPPKALKSLGDAFLAGIEKGLKAAGLNYAASRVYAAPRRLAVLVEQLEEQQADRSMNLDGPPIQAAFDADGNPTQAALGFARKCGVDIAEIDRSGAKLRFAQHIPGQPAVNLLPTIVQDSLNDLPIPKRMRWAARRDEFVRPTQWLVMLFGDAVVDCEILAQKAGRVSRGHRFHANREVRISSPANYAEDLRSAYVLADFAERREIISRRVDELAAAEQGTAIVPPALLDEVTALVEWPVPLVCSFEERFLEVPQEALISTMQDNQKYFCLLDAGGKLLPRFITVANIESKDPAQIVSGNEKVVRPRLTDAEFFFKQDKKQKLEGFNQRLANVVFQAQLGSVFDKAQRVSALAGFIAREVGGDEARAARAGLLSKCDLATEMVGEFPEMQGIAGYYYALNDGEPQDVALALNEQYMPRGAGAELPSTLTGAAVAVADKLDTLVGIFGIGMLPTGSKDPYALRRAALGVLRILIEKGLDLDLAAAVDFAVAQYAGKVKSDGLAAQVLEFIFDRLRARYEDEGIEVAVYQAVRAVNPTSPLDFDQRVQAVQAFRKLPQAEALAAANKRVSNLLSKAEGGVAAQVEAHYFDNPSEFALHAAIQQADQAVQPLAAARQYNEALAKLASLREPVDAFFEAVLVNAEDARVRANRYALLARLRGLFLGVADISVLG</sequence>
<comment type="catalytic activity">
    <reaction evidence="1">
        <text>tRNA(Gly) + glycine + ATP = glycyl-tRNA(Gly) + AMP + diphosphate</text>
        <dbReference type="Rhea" id="RHEA:16013"/>
        <dbReference type="Rhea" id="RHEA-COMP:9664"/>
        <dbReference type="Rhea" id="RHEA-COMP:9683"/>
        <dbReference type="ChEBI" id="CHEBI:30616"/>
        <dbReference type="ChEBI" id="CHEBI:33019"/>
        <dbReference type="ChEBI" id="CHEBI:57305"/>
        <dbReference type="ChEBI" id="CHEBI:78442"/>
        <dbReference type="ChEBI" id="CHEBI:78522"/>
        <dbReference type="ChEBI" id="CHEBI:456215"/>
        <dbReference type="EC" id="6.1.1.14"/>
    </reaction>
</comment>
<comment type="subunit">
    <text evidence="1">Tetramer of two alpha and two beta subunits.</text>
</comment>
<comment type="subcellular location">
    <subcellularLocation>
        <location evidence="1">Cytoplasm</location>
    </subcellularLocation>
</comment>
<comment type="similarity">
    <text evidence="1">Belongs to the class-II aminoacyl-tRNA synthetase family.</text>
</comment>
<proteinExistence type="inferred from homology"/>
<reference key="1">
    <citation type="submission" date="2007-04" db="EMBL/GenBank/DDBJ databases">
        <title>Complete sequence of Pseudomonas mendocina ymp.</title>
        <authorList>
            <consortium name="US DOE Joint Genome Institute"/>
            <person name="Copeland A."/>
            <person name="Lucas S."/>
            <person name="Lapidus A."/>
            <person name="Barry K."/>
            <person name="Glavina del Rio T."/>
            <person name="Dalin E."/>
            <person name="Tice H."/>
            <person name="Pitluck S."/>
            <person name="Kiss H."/>
            <person name="Brettin T."/>
            <person name="Detter J.C."/>
            <person name="Bruce D."/>
            <person name="Han C."/>
            <person name="Schmutz J."/>
            <person name="Larimer F."/>
            <person name="Land M."/>
            <person name="Hauser L."/>
            <person name="Kyrpides N."/>
            <person name="Mikhailova N."/>
            <person name="Hersman L."/>
            <person name="Dubois J."/>
            <person name="Maurice P."/>
            <person name="Richardson P."/>
        </authorList>
    </citation>
    <scope>NUCLEOTIDE SEQUENCE [LARGE SCALE GENOMIC DNA]</scope>
    <source>
        <strain>ymp</strain>
    </source>
</reference>
<evidence type="ECO:0000255" key="1">
    <source>
        <dbReference type="HAMAP-Rule" id="MF_00255"/>
    </source>
</evidence>